<proteinExistence type="evidence at protein level"/>
<protein>
    <recommendedName>
        <fullName>Metallothionein 10-Ia</fullName>
        <shortName>MT-10-Ia</shortName>
    </recommendedName>
</protein>
<name>MT10A_MYTED</name>
<organism>
    <name type="scientific">Mytilus edulis</name>
    <name type="common">Blue mussel</name>
    <dbReference type="NCBI Taxonomy" id="6550"/>
    <lineage>
        <taxon>Eukaryota</taxon>
        <taxon>Metazoa</taxon>
        <taxon>Spiralia</taxon>
        <taxon>Lophotrochozoa</taxon>
        <taxon>Mollusca</taxon>
        <taxon>Bivalvia</taxon>
        <taxon>Autobranchia</taxon>
        <taxon>Pteriomorphia</taxon>
        <taxon>Mytilida</taxon>
        <taxon>Mytiloidea</taxon>
        <taxon>Mytilidae</taxon>
        <taxon>Mytilinae</taxon>
        <taxon>Mytilus</taxon>
    </lineage>
</organism>
<evidence type="ECO:0000250" key="1">
    <source>
        <dbReference type="UniProtKB" id="P33187"/>
    </source>
</evidence>
<evidence type="ECO:0000269" key="2">
    <source>
    </source>
</evidence>
<evidence type="ECO:0000305" key="3"/>
<accession>P80246</accession>
<sequence>MPAPCNCIETNVCICDTGCSGEGCRCGDACKCSGADCKCSGCKVVCKCSGRCECGKGCTGPSTCKCAPGCSCK</sequence>
<comment type="function">
    <text>The metallothioneins are involved in the cellular sequestration of toxic metal ions.</text>
</comment>
<comment type="subunit">
    <text>Monomer.</text>
</comment>
<comment type="induction">
    <text>By cadmium.</text>
</comment>
<comment type="similarity">
    <text evidence="3">Belongs to the metallothionein superfamily. Type 2 family.</text>
</comment>
<keyword id="KW-0104">Cadmium</keyword>
<keyword id="KW-0903">Direct protein sequencing</keyword>
<keyword id="KW-0479">Metal-binding</keyword>
<keyword id="KW-0480">Metal-thiolate cluster</keyword>
<dbReference type="EMBL" id="AJ005451">
    <property type="protein sequence ID" value="CAA06548.1"/>
    <property type="molecule type" value="mRNA"/>
</dbReference>
<dbReference type="PIR" id="S39416">
    <property type="entry name" value="S39416"/>
</dbReference>
<dbReference type="SMR" id="P80246"/>
<dbReference type="GO" id="GO:0046872">
    <property type="term" value="F:metal ion binding"/>
    <property type="evidence" value="ECO:0007669"/>
    <property type="project" value="UniProtKB-KW"/>
</dbReference>
<dbReference type="InterPro" id="IPR001008">
    <property type="entry name" value="Metalthion_mollusc"/>
</dbReference>
<dbReference type="PRINTS" id="PR00875">
    <property type="entry name" value="MTMOLLUSC"/>
</dbReference>
<feature type="initiator methionine" description="Removed" evidence="2">
    <location>
        <position position="1"/>
    </location>
</feature>
<feature type="chain" id="PRO_0000197324" description="Metallothionein 10-Ia">
    <location>
        <begin position="2"/>
        <end position="73"/>
    </location>
</feature>
<feature type="binding site" evidence="1">
    <location>
        <position position="15"/>
    </location>
    <ligand>
        <name>Cd(2+)</name>
        <dbReference type="ChEBI" id="CHEBI:48775"/>
        <label>1</label>
    </ligand>
</feature>
<feature type="binding site" evidence="1">
    <location>
        <position position="19"/>
    </location>
    <ligand>
        <name>Cd(2+)</name>
        <dbReference type="ChEBI" id="CHEBI:48775"/>
        <label>1</label>
    </ligand>
</feature>
<feature type="binding site" evidence="1">
    <location>
        <position position="19"/>
    </location>
    <ligand>
        <name>Cd(2+)</name>
        <dbReference type="ChEBI" id="CHEBI:48775"/>
        <label>2</label>
    </ligand>
</feature>
<feature type="binding site" evidence="1">
    <location>
        <position position="24"/>
    </location>
    <ligand>
        <name>Cd(2+)</name>
        <dbReference type="ChEBI" id="CHEBI:48775"/>
        <label>2</label>
    </ligand>
</feature>
<feature type="binding site" evidence="1">
    <location>
        <position position="26"/>
    </location>
    <ligand>
        <name>Cd(2+)</name>
        <dbReference type="ChEBI" id="CHEBI:48775"/>
        <label>3</label>
    </ligand>
</feature>
<feature type="binding site" evidence="1">
    <location>
        <position position="30"/>
    </location>
    <ligand>
        <name>Cd(2+)</name>
        <dbReference type="ChEBI" id="CHEBI:48775"/>
        <label>3</label>
    </ligand>
</feature>
<feature type="binding site" evidence="1">
    <location>
        <position position="32"/>
    </location>
    <ligand>
        <name>Cd(2+)</name>
        <dbReference type="ChEBI" id="CHEBI:48775"/>
        <label>1</label>
    </ligand>
</feature>
<feature type="binding site" evidence="1">
    <location>
        <position position="32"/>
    </location>
    <ligand>
        <name>Cd(2+)</name>
        <dbReference type="ChEBI" id="CHEBI:48775"/>
        <label>3</label>
    </ligand>
</feature>
<feature type="binding site" evidence="1">
    <location>
        <position position="37"/>
    </location>
    <ligand>
        <name>Cd(2+)</name>
        <dbReference type="ChEBI" id="CHEBI:48775"/>
        <label>1</label>
    </ligand>
</feature>
<feature type="binding site" evidence="1">
    <location>
        <position position="39"/>
    </location>
    <ligand>
        <name>Cd(2+)</name>
        <dbReference type="ChEBI" id="CHEBI:48775"/>
        <label>2</label>
    </ligand>
</feature>
<feature type="binding site" evidence="1">
    <location>
        <position position="42"/>
    </location>
    <ligand>
        <name>Cd(2+)</name>
        <dbReference type="ChEBI" id="CHEBI:48775"/>
        <label>2</label>
    </ligand>
</feature>
<feature type="binding site" evidence="1">
    <location>
        <position position="42"/>
    </location>
    <ligand>
        <name>Cd(2+)</name>
        <dbReference type="ChEBI" id="CHEBI:48775"/>
        <label>3</label>
    </ligand>
</feature>
<feature type="binding site" evidence="1">
    <location>
        <position position="46"/>
    </location>
    <ligand>
        <name>Cd(2+)</name>
        <dbReference type="ChEBI" id="CHEBI:48775"/>
        <label>4</label>
    </ligand>
</feature>
<feature type="binding site" evidence="1">
    <location>
        <position position="48"/>
    </location>
    <ligand>
        <name>Cd(2+)</name>
        <dbReference type="ChEBI" id="CHEBI:48775"/>
        <label>5</label>
    </ligand>
</feature>
<feature type="binding site" evidence="1">
    <location>
        <position position="52"/>
    </location>
    <ligand>
        <name>Cd(2+)</name>
        <dbReference type="ChEBI" id="CHEBI:48775"/>
        <label>5</label>
    </ligand>
</feature>
<feature type="binding site" evidence="1">
    <location>
        <position position="54"/>
    </location>
    <ligand>
        <name>Cd(2+)</name>
        <dbReference type="ChEBI" id="CHEBI:48775"/>
        <label>5</label>
    </ligand>
</feature>
<feature type="binding site" evidence="1">
    <location>
        <position position="54"/>
    </location>
    <ligand>
        <name>Cd(2+)</name>
        <dbReference type="ChEBI" id="CHEBI:48775"/>
        <label>6</label>
    </ligand>
</feature>
<feature type="binding site" evidence="1">
    <location>
        <position position="58"/>
    </location>
    <ligand>
        <name>Cd(2+)</name>
        <dbReference type="ChEBI" id="CHEBI:48775"/>
        <label>4</label>
    </ligand>
</feature>
<feature type="binding site" evidence="1">
    <location>
        <position position="58"/>
    </location>
    <ligand>
        <name>Cd(2+)</name>
        <dbReference type="ChEBI" id="CHEBI:48775"/>
        <label>5</label>
    </ligand>
</feature>
<feature type="binding site" evidence="1">
    <location>
        <position position="64"/>
    </location>
    <ligand>
        <name>Cd(2+)</name>
        <dbReference type="ChEBI" id="CHEBI:48775"/>
        <label>4</label>
    </ligand>
</feature>
<feature type="binding site" evidence="1">
    <location>
        <position position="66"/>
    </location>
    <ligand>
        <name>Cd(2+)</name>
        <dbReference type="ChEBI" id="CHEBI:48775"/>
        <label>6</label>
    </ligand>
</feature>
<feature type="binding site" evidence="1">
    <location>
        <position position="70"/>
    </location>
    <ligand>
        <name>Cd(2+)</name>
        <dbReference type="ChEBI" id="CHEBI:48775"/>
        <label>6</label>
    </ligand>
</feature>
<feature type="binding site" evidence="1">
    <location>
        <position position="72"/>
    </location>
    <ligand>
        <name>Cd(2+)</name>
        <dbReference type="ChEBI" id="CHEBI:48775"/>
        <label>4</label>
    </ligand>
</feature>
<feature type="binding site" evidence="1">
    <location>
        <position position="72"/>
    </location>
    <ligand>
        <name>Cd(2+)</name>
        <dbReference type="ChEBI" id="CHEBI:48775"/>
        <label>6</label>
    </ligand>
</feature>
<reference key="1">
    <citation type="journal article" date="1999" name="Comp. Biochem. Physiol.">
        <title>Cloning and characterization of metallothionein cDNAs in the mussel Mytilus edulis L. digestive gland.</title>
        <authorList>
            <person name="Barsyte D."/>
            <person name="White K.N."/>
            <person name="Lovejoy D.A."/>
        </authorList>
    </citation>
    <scope>NUCLEOTIDE SEQUENCE [MRNA]</scope>
    <source>
        <tissue>Digestive gland</tissue>
    </source>
</reference>
<reference key="2">
    <citation type="journal article" date="1993" name="Eur. J. Biochem.">
        <title>Complete amino acid sequences of five dimeric and four monomeric forms of metallothionein from the edible mussel Mytilus edulis.</title>
        <authorList>
            <person name="Mackay E.A."/>
            <person name="Overnell J."/>
            <person name="Dunbar B."/>
            <person name="Davidson I."/>
            <person name="Hunziker P.E."/>
            <person name="Kaegi J.H.R."/>
            <person name="Fothergill J.E."/>
        </authorList>
    </citation>
    <scope>PROTEIN SEQUENCE OF 2-73</scope>
</reference>